<protein>
    <recommendedName>
        <fullName evidence="1">Flagellar hook-basal body complex protein FliE</fullName>
    </recommendedName>
</protein>
<keyword id="KW-0975">Bacterial flagellum</keyword>
<comment type="subcellular location">
    <subcellularLocation>
        <location evidence="1">Bacterial flagellum basal body</location>
    </subcellularLocation>
</comment>
<comment type="similarity">
    <text evidence="1">Belongs to the FliE family.</text>
</comment>
<dbReference type="EMBL" id="CP001074">
    <property type="protein sequence ID" value="ACE89726.1"/>
    <property type="molecule type" value="Genomic_DNA"/>
</dbReference>
<dbReference type="SMR" id="B3PPL9"/>
<dbReference type="KEGG" id="rec:RHECIAT_CH0000737"/>
<dbReference type="eggNOG" id="COG1677">
    <property type="taxonomic scope" value="Bacteria"/>
</dbReference>
<dbReference type="HOGENOM" id="CLU_147249_2_0_5"/>
<dbReference type="Proteomes" id="UP000008817">
    <property type="component" value="Chromosome"/>
</dbReference>
<dbReference type="GO" id="GO:0009425">
    <property type="term" value="C:bacterial-type flagellum basal body"/>
    <property type="evidence" value="ECO:0007669"/>
    <property type="project" value="UniProtKB-SubCell"/>
</dbReference>
<dbReference type="GO" id="GO:0003774">
    <property type="term" value="F:cytoskeletal motor activity"/>
    <property type="evidence" value="ECO:0007669"/>
    <property type="project" value="InterPro"/>
</dbReference>
<dbReference type="GO" id="GO:0005198">
    <property type="term" value="F:structural molecule activity"/>
    <property type="evidence" value="ECO:0007669"/>
    <property type="project" value="InterPro"/>
</dbReference>
<dbReference type="GO" id="GO:0071973">
    <property type="term" value="P:bacterial-type flagellum-dependent cell motility"/>
    <property type="evidence" value="ECO:0007669"/>
    <property type="project" value="InterPro"/>
</dbReference>
<dbReference type="HAMAP" id="MF_00724">
    <property type="entry name" value="FliE"/>
    <property type="match status" value="1"/>
</dbReference>
<dbReference type="InterPro" id="IPR001624">
    <property type="entry name" value="FliE"/>
</dbReference>
<dbReference type="PANTHER" id="PTHR34653">
    <property type="match status" value="1"/>
</dbReference>
<dbReference type="PANTHER" id="PTHR34653:SF1">
    <property type="entry name" value="FLAGELLAR HOOK-BASAL BODY COMPLEX PROTEIN FLIE"/>
    <property type="match status" value="1"/>
</dbReference>
<dbReference type="Pfam" id="PF02049">
    <property type="entry name" value="FliE"/>
    <property type="match status" value="1"/>
</dbReference>
<accession>B3PPL9</accession>
<reference key="1">
    <citation type="journal article" date="2010" name="Appl. Environ. Microbiol.">
        <title>Conserved symbiotic plasmid DNA sequences in the multireplicon pangenomic structure of Rhizobium etli.</title>
        <authorList>
            <person name="Gonzalez V."/>
            <person name="Acosta J.L."/>
            <person name="Santamaria R.I."/>
            <person name="Bustos P."/>
            <person name="Fernandez J.L."/>
            <person name="Hernandez Gonzalez I.L."/>
            <person name="Diaz R."/>
            <person name="Flores M."/>
            <person name="Palacios R."/>
            <person name="Mora J."/>
            <person name="Davila G."/>
        </authorList>
    </citation>
    <scope>NUCLEOTIDE SEQUENCE [LARGE SCALE GENOMIC DNA]</scope>
    <source>
        <strain>CIAT 652</strain>
    </source>
</reference>
<organism>
    <name type="scientific">Rhizobium etli (strain CIAT 652)</name>
    <dbReference type="NCBI Taxonomy" id="491916"/>
    <lineage>
        <taxon>Bacteria</taxon>
        <taxon>Pseudomonadati</taxon>
        <taxon>Pseudomonadota</taxon>
        <taxon>Alphaproteobacteria</taxon>
        <taxon>Hyphomicrobiales</taxon>
        <taxon>Rhizobiaceae</taxon>
        <taxon>Rhizobium/Agrobacterium group</taxon>
        <taxon>Rhizobium</taxon>
    </lineage>
</organism>
<sequence>MISSVQNVSNLSMTRALGAVDTENSASSSAATMPGTAGAANGVSFASVMGNMASDAVNSLKGAESMSFAGIKGTATTREVVDSMLQAEQTLQTAIAIRDKVVSAFLEVTKMQM</sequence>
<evidence type="ECO:0000255" key="1">
    <source>
        <dbReference type="HAMAP-Rule" id="MF_00724"/>
    </source>
</evidence>
<feature type="chain" id="PRO_1000132667" description="Flagellar hook-basal body complex protein FliE">
    <location>
        <begin position="1"/>
        <end position="113"/>
    </location>
</feature>
<gene>
    <name evidence="1" type="primary">fliE</name>
    <name type="ordered locus">RHECIAT_CH0000737</name>
</gene>
<proteinExistence type="inferred from homology"/>
<name>FLIE_RHIE6</name>